<accession>Q4WHK3</accession>
<protein>
    <recommendedName>
        <fullName evidence="1">Succinate dehydrogenase assembly factor 3, mitochondrial</fullName>
        <shortName evidence="1">SDH assembly factor 3</shortName>
        <shortName evidence="1">SDHAF3</shortName>
    </recommendedName>
</protein>
<feature type="transit peptide" description="Mitochondrion" evidence="3">
    <location>
        <begin position="1"/>
        <end status="unknown"/>
    </location>
</feature>
<feature type="chain" id="PRO_0000042741" description="Succinate dehydrogenase assembly factor 3, mitochondrial">
    <location>
        <begin status="unknown"/>
        <end position="129"/>
    </location>
</feature>
<sequence>MRLFHRLLMATPSTMGSKSSLSEALALLPPLQLYRRILRVHRRKLDPEMRILGDSYVKSEFRAHRNVENPLHIIGFLTEWQLYAQKLEGDAWVGEKLDKSKLDKMSDQQIGQLYELMQAIKNPEGEGKE</sequence>
<evidence type="ECO:0000250" key="1">
    <source>
        <dbReference type="UniProtKB" id="Q04401"/>
    </source>
</evidence>
<evidence type="ECO:0000250" key="2">
    <source>
        <dbReference type="UniProtKB" id="Q8SZ16"/>
    </source>
</evidence>
<evidence type="ECO:0000255" key="3"/>
<evidence type="ECO:0000305" key="4"/>
<organism>
    <name type="scientific">Aspergillus fumigatus (strain ATCC MYA-4609 / CBS 101355 / FGSC A1100 / Af293)</name>
    <name type="common">Neosartorya fumigata</name>
    <dbReference type="NCBI Taxonomy" id="330879"/>
    <lineage>
        <taxon>Eukaryota</taxon>
        <taxon>Fungi</taxon>
        <taxon>Dikarya</taxon>
        <taxon>Ascomycota</taxon>
        <taxon>Pezizomycotina</taxon>
        <taxon>Eurotiomycetes</taxon>
        <taxon>Eurotiomycetidae</taxon>
        <taxon>Eurotiales</taxon>
        <taxon>Aspergillaceae</taxon>
        <taxon>Aspergillus</taxon>
        <taxon>Aspergillus subgen. Fumigati</taxon>
    </lineage>
</organism>
<proteinExistence type="inferred from homology"/>
<comment type="function">
    <text evidence="1 2">Plays an essential role in the assembly of succinate dehydrogenase (SDH), an enzyme complex (also referred to as respiratory complex II) that is a component of both the tricarboxylic acid (TCA) cycle and the mitochondrial electron transport chain, and which couples the oxidation of succinate to fumarate with the reduction of ubiquinone (coenzyme Q) to ubiquinol. Promotes maturation of the iron-sulfur protein subunit of the SDH catalytic dimer, protecting it from the deleterious effects of oxidants. May act together with SDHAF1.</text>
</comment>
<comment type="subunit">
    <text evidence="1">Interacts with the iron-sulfur protein subunit within the SDH catalytic dimer.</text>
</comment>
<comment type="subcellular location">
    <subcellularLocation>
        <location evidence="1">Mitochondrion matrix</location>
    </subcellularLocation>
</comment>
<comment type="similarity">
    <text evidence="4">Belongs to the complex I LYR family. SDHAF3 subfamily.</text>
</comment>
<comment type="sequence caution" evidence="4">
    <conflict type="erroneous gene model prediction">
        <sequence resource="EMBL-CDS" id="EAL87602"/>
    </conflict>
</comment>
<reference key="1">
    <citation type="journal article" date="2005" name="Nature">
        <title>Genomic sequence of the pathogenic and allergenic filamentous fungus Aspergillus fumigatus.</title>
        <authorList>
            <person name="Nierman W.C."/>
            <person name="Pain A."/>
            <person name="Anderson M.J."/>
            <person name="Wortman J.R."/>
            <person name="Kim H.S."/>
            <person name="Arroyo J."/>
            <person name="Berriman M."/>
            <person name="Abe K."/>
            <person name="Archer D.B."/>
            <person name="Bermejo C."/>
            <person name="Bennett J.W."/>
            <person name="Bowyer P."/>
            <person name="Chen D."/>
            <person name="Collins M."/>
            <person name="Coulsen R."/>
            <person name="Davies R."/>
            <person name="Dyer P.S."/>
            <person name="Farman M.L."/>
            <person name="Fedorova N."/>
            <person name="Fedorova N.D."/>
            <person name="Feldblyum T.V."/>
            <person name="Fischer R."/>
            <person name="Fosker N."/>
            <person name="Fraser A."/>
            <person name="Garcia J.L."/>
            <person name="Garcia M.J."/>
            <person name="Goble A."/>
            <person name="Goldman G.H."/>
            <person name="Gomi K."/>
            <person name="Griffith-Jones S."/>
            <person name="Gwilliam R."/>
            <person name="Haas B.J."/>
            <person name="Haas H."/>
            <person name="Harris D.E."/>
            <person name="Horiuchi H."/>
            <person name="Huang J."/>
            <person name="Humphray S."/>
            <person name="Jimenez J."/>
            <person name="Keller N."/>
            <person name="Khouri H."/>
            <person name="Kitamoto K."/>
            <person name="Kobayashi T."/>
            <person name="Konzack S."/>
            <person name="Kulkarni R."/>
            <person name="Kumagai T."/>
            <person name="Lafton A."/>
            <person name="Latge J.-P."/>
            <person name="Li W."/>
            <person name="Lord A."/>
            <person name="Lu C."/>
            <person name="Majoros W.H."/>
            <person name="May G.S."/>
            <person name="Miller B.L."/>
            <person name="Mohamoud Y."/>
            <person name="Molina M."/>
            <person name="Monod M."/>
            <person name="Mouyna I."/>
            <person name="Mulligan S."/>
            <person name="Murphy L.D."/>
            <person name="O'Neil S."/>
            <person name="Paulsen I."/>
            <person name="Penalva M.A."/>
            <person name="Pertea M."/>
            <person name="Price C."/>
            <person name="Pritchard B.L."/>
            <person name="Quail M.A."/>
            <person name="Rabbinowitsch E."/>
            <person name="Rawlins N."/>
            <person name="Rajandream M.A."/>
            <person name="Reichard U."/>
            <person name="Renauld H."/>
            <person name="Robson G.D."/>
            <person name="Rodriguez de Cordoba S."/>
            <person name="Rodriguez-Pena J.M."/>
            <person name="Ronning C.M."/>
            <person name="Rutter S."/>
            <person name="Salzberg S.L."/>
            <person name="Sanchez M."/>
            <person name="Sanchez-Ferrero J.C."/>
            <person name="Saunders D."/>
            <person name="Seeger K."/>
            <person name="Squares R."/>
            <person name="Squares S."/>
            <person name="Takeuchi M."/>
            <person name="Tekaia F."/>
            <person name="Turner G."/>
            <person name="Vazquez de Aldana C.R."/>
            <person name="Weidman J."/>
            <person name="White O."/>
            <person name="Woodward J.R."/>
            <person name="Yu J.-H."/>
            <person name="Fraser C.M."/>
            <person name="Galagan J.E."/>
            <person name="Asai K."/>
            <person name="Machida M."/>
            <person name="Hall N."/>
            <person name="Barrell B.G."/>
            <person name="Denning D.W."/>
        </authorList>
    </citation>
    <scope>NUCLEOTIDE SEQUENCE [LARGE SCALE GENOMIC DNA]</scope>
    <source>
        <strain>ATCC MYA-4609 / CBS 101355 / FGSC A1100 / Af293</strain>
    </source>
</reference>
<name>SDHF3_ASPFU</name>
<keyword id="KW-0143">Chaperone</keyword>
<keyword id="KW-0312">Gluconeogenesis</keyword>
<keyword id="KW-0496">Mitochondrion</keyword>
<keyword id="KW-1185">Reference proteome</keyword>
<keyword id="KW-0809">Transit peptide</keyword>
<gene>
    <name type="ORF">AFUA_2G05090</name>
</gene>
<dbReference type="EMBL" id="AAHF01000008">
    <property type="protein sequence ID" value="EAL87602.2"/>
    <property type="status" value="ALT_SEQ"/>
    <property type="molecule type" value="Genomic_DNA"/>
</dbReference>
<dbReference type="RefSeq" id="XP_749640.2">
    <property type="nucleotide sequence ID" value="XM_744547.2"/>
</dbReference>
<dbReference type="SMR" id="Q4WHK3"/>
<dbReference type="FunCoup" id="Q4WHK3">
    <property type="interactions" value="251"/>
</dbReference>
<dbReference type="STRING" id="330879.Q4WHK3"/>
<dbReference type="GeneID" id="3507104"/>
<dbReference type="KEGG" id="afm:AFUA_2G05090"/>
<dbReference type="eggNOG" id="KOG4100">
    <property type="taxonomic scope" value="Eukaryota"/>
</dbReference>
<dbReference type="HOGENOM" id="CLU_102310_1_0_1"/>
<dbReference type="InParanoid" id="Q4WHK3"/>
<dbReference type="OrthoDB" id="278329at2759"/>
<dbReference type="Proteomes" id="UP000002530">
    <property type="component" value="Chromosome 2"/>
</dbReference>
<dbReference type="GO" id="GO:0005758">
    <property type="term" value="C:mitochondrial intermembrane space"/>
    <property type="evidence" value="ECO:0000318"/>
    <property type="project" value="GO_Central"/>
</dbReference>
<dbReference type="GO" id="GO:0005759">
    <property type="term" value="C:mitochondrial matrix"/>
    <property type="evidence" value="ECO:0007669"/>
    <property type="project" value="UniProtKB-SubCell"/>
</dbReference>
<dbReference type="GO" id="GO:0006094">
    <property type="term" value="P:gluconeogenesis"/>
    <property type="evidence" value="ECO:0007669"/>
    <property type="project" value="UniProtKB-KW"/>
</dbReference>
<dbReference type="GO" id="GO:0034553">
    <property type="term" value="P:mitochondrial respiratory chain complex II assembly"/>
    <property type="evidence" value="ECO:0000318"/>
    <property type="project" value="GO_Central"/>
</dbReference>
<dbReference type="GO" id="GO:0006105">
    <property type="term" value="P:succinate metabolic process"/>
    <property type="evidence" value="ECO:0000318"/>
    <property type="project" value="GO_Central"/>
</dbReference>
<dbReference type="CDD" id="cd20270">
    <property type="entry name" value="Complex1_LYR_SDHAF3_LYRM10"/>
    <property type="match status" value="1"/>
</dbReference>
<dbReference type="InterPro" id="IPR008381">
    <property type="entry name" value="SDHAF3/Sdh7"/>
</dbReference>
<dbReference type="PANTHER" id="PTHR13137">
    <property type="entry name" value="DC11 ACN9 HOMOLOG"/>
    <property type="match status" value="1"/>
</dbReference>
<dbReference type="PANTHER" id="PTHR13137:SF6">
    <property type="entry name" value="SUCCINATE DEHYDROGENASE ASSEMBLY FACTOR 3, MITOCHONDRIAL"/>
    <property type="match status" value="1"/>
</dbReference>
<dbReference type="Pfam" id="PF13233">
    <property type="entry name" value="Complex1_LYR_2"/>
    <property type="match status" value="1"/>
</dbReference>